<comment type="function">
    <text evidence="2 7">Aerial growth, conidiation, and dispersal of filamentous fungi in the environment rely upon a capability of their secreting small amphipathic proteins called hydrophobins (HPBs) with low sequence identity. Class I can self-assemble into an outermost layer of rodlet bundles on aerial cell surfaces, conferring cellular hydrophobicity that supports fungal growth, development and dispersal; whereas Class II form highly ordered films at water-air interfaces through intermolecular interactions but contribute nothing to the rodlet structure (Probable). HgfI is a class I hydrophobin that is involved in cell surface hydrophobicity and lowers the surface tension of water and change the nature of the surfaces to which it adsorbs (PubMed:18524922).</text>
</comment>
<comment type="subunit">
    <text evidence="2">Self-assembles to form functional amyloid fibrils called rodlets with a length range 100-150 nm. Self-assembly into fibrillar rodlets occurs spontaneously at hydrophobic:hydrophilic interfaces and the rodlets further associate laterally to form amphipathic monolayers.</text>
</comment>
<comment type="subcellular location">
    <subcellularLocation>
        <location evidence="2">Secreted</location>
    </subcellularLocation>
    <subcellularLocation>
        <location evidence="2">Secreted</location>
        <location evidence="2">Cell wall</location>
    </subcellularLocation>
</comment>
<comment type="tissue specificity">
    <text evidence="5">Only weekly expressed in hyphae cultured in liquid medium.</text>
</comment>
<comment type="biotechnology">
    <text evidence="3 4">HgfI has been widely tested in the development of antibacterial materials and as a biological drug carrier.</text>
</comment>
<comment type="similarity">
    <text evidence="7">Belongs to the fungal hydrophobin family.</text>
</comment>
<keyword id="KW-0134">Cell wall</keyword>
<keyword id="KW-0903">Direct protein sequencing</keyword>
<keyword id="KW-1015">Disulfide bond</keyword>
<keyword id="KW-0964">Secreted</keyword>
<keyword id="KW-0732">Signal</keyword>
<sequence>MFSKLAIFATAAFAVLAAATPVRRQQCTTGQLQCCESTSTANDPATSELLGLIGVVISDVDALVGLTCSPISVIGVGSGSACTANPVCCDSSPIGGLVSIGCVPVNV</sequence>
<proteinExistence type="evidence at protein level"/>
<organism>
    <name type="scientific">Grifola frondosa</name>
    <name type="common">Maitake</name>
    <name type="synonym">Polyporus frondosus</name>
    <dbReference type="NCBI Taxonomy" id="5627"/>
    <lineage>
        <taxon>Eukaryota</taxon>
        <taxon>Fungi</taxon>
        <taxon>Dikarya</taxon>
        <taxon>Basidiomycota</taxon>
        <taxon>Agaricomycotina</taxon>
        <taxon>Agaricomycetes</taxon>
        <taxon>Polyporales</taxon>
        <taxon>Grifolaceae</taxon>
        <taxon>Grifola</taxon>
    </lineage>
</organism>
<reference key="1">
    <citation type="journal article" date="2008" name="Microbiology">
        <title>Protein HGFI from the edible mushroom Grifola frondosa is a novel 8 kDa class I hydrophobin that forms rodlets in compressed monolayers.</title>
        <authorList>
            <person name="Yu L."/>
            <person name="Zhang B."/>
            <person name="Szilvay G.R."/>
            <person name="Sun R."/>
            <person name="Janis J."/>
            <person name="Wang Z."/>
            <person name="Feng S."/>
            <person name="Xu H."/>
            <person name="Linder M.B."/>
            <person name="Qiao M."/>
        </authorList>
    </citation>
    <scope>NUCLEOTIDE SEQUENCE [GENOMIC DNA / MRNA]</scope>
    <scope>PROTEIN SEQUENCE OF 25-32</scope>
    <scope>SUBUNIT</scope>
    <scope>SUBCELLULAR LOCATION</scope>
    <scope>FUNCTION</scope>
</reference>
<reference key="2">
    <citation type="journal article" date="2016" name="Sci. Rep.">
        <title>Novel application of hydrophobin in medical science: a drug carrier for improving serum stability.</title>
        <authorList>
            <person name="Zhao L."/>
            <person name="Xu H."/>
            <person name="Li Y."/>
            <person name="Song D."/>
            <person name="Wang X."/>
            <person name="Qiao M."/>
            <person name="Gong M."/>
        </authorList>
    </citation>
    <scope>BIOTECHNOLOGY</scope>
</reference>
<reference key="3">
    <citation type="journal article" date="2017" name="Colloids Surf. B Biointerfaces">
        <title>Design of antibacterial biointerfaces by surface modification of poly (epsilon-caprolactone) with fusion protein containing hydrophobin and PA-1.</title>
        <authorList>
            <person name="Wang X."/>
            <person name="Mao J."/>
            <person name="Chen Y."/>
            <person name="Song D."/>
            <person name="Gao Z."/>
            <person name="Zhang X."/>
            <person name="Bai Y."/>
            <person name="Saris P.E.J."/>
            <person name="Feng H."/>
            <person name="Xu H."/>
            <person name="Qiao M."/>
        </authorList>
    </citation>
    <scope>BIOTECHNOLOGY</scope>
</reference>
<reference key="4">
    <citation type="journal article" date="2022" name="Front. Microbiol.">
        <title>A novel hydrophobin encoded by hgfII from Grifola frondosa exhibiting excellent self-assembly ability.</title>
        <authorList>
            <person name="Yang J."/>
            <person name="Ge L."/>
            <person name="Song B."/>
            <person name="Ma Z."/>
            <person name="Yang X."/>
            <person name="Wang B."/>
            <person name="Dai Y."/>
            <person name="Xu H."/>
            <person name="Qiao M."/>
        </authorList>
    </citation>
    <scope>TISSUE SPECIFICITY</scope>
</reference>
<feature type="signal peptide" evidence="2">
    <location>
        <begin position="1"/>
        <end position="24"/>
    </location>
</feature>
<feature type="chain" id="PRO_5013981925" description="Class I hydrophobin hgfI">
    <location>
        <begin position="25"/>
        <end position="107"/>
    </location>
</feature>
<feature type="disulfide bond" evidence="1">
    <location>
        <begin position="27"/>
        <end position="88"/>
    </location>
</feature>
<feature type="disulfide bond" evidence="1">
    <location>
        <begin position="34"/>
        <end position="82"/>
    </location>
</feature>
<feature type="disulfide bond" evidence="1">
    <location>
        <begin position="35"/>
        <end position="68"/>
    </location>
</feature>
<feature type="disulfide bond" evidence="1">
    <location>
        <begin position="89"/>
        <end position="102"/>
    </location>
</feature>
<gene>
    <name evidence="6" type="primary">hgfI</name>
</gene>
<protein>
    <recommendedName>
        <fullName evidence="6">Class I hydrophobin hgfI</fullName>
    </recommendedName>
</protein>
<accession>A4LAR6</accession>
<dbReference type="EMBL" id="DQ267941">
    <property type="protein sequence ID" value="ABB84487.1"/>
    <property type="molecule type" value="mRNA"/>
</dbReference>
<dbReference type="EMBL" id="EF486307">
    <property type="protein sequence ID" value="ABO42329.1"/>
    <property type="molecule type" value="Genomic_DNA"/>
</dbReference>
<dbReference type="SMR" id="A4LAR6"/>
<dbReference type="GO" id="GO:0005576">
    <property type="term" value="C:extracellular region"/>
    <property type="evidence" value="ECO:0007669"/>
    <property type="project" value="UniProtKB-KW"/>
</dbReference>
<dbReference type="GO" id="GO:0009277">
    <property type="term" value="C:fungal-type cell wall"/>
    <property type="evidence" value="ECO:0007669"/>
    <property type="project" value="InterPro"/>
</dbReference>
<dbReference type="GO" id="GO:0005199">
    <property type="term" value="F:structural constituent of cell wall"/>
    <property type="evidence" value="ECO:0007669"/>
    <property type="project" value="InterPro"/>
</dbReference>
<dbReference type="CDD" id="cd23507">
    <property type="entry name" value="hydrophobin_I"/>
    <property type="match status" value="1"/>
</dbReference>
<dbReference type="InterPro" id="IPR001338">
    <property type="entry name" value="Hydrophobin"/>
</dbReference>
<dbReference type="InterPro" id="IPR019778">
    <property type="entry name" value="Hydrophobin_CS"/>
</dbReference>
<dbReference type="Pfam" id="PF01185">
    <property type="entry name" value="Hydrophobin"/>
    <property type="match status" value="1"/>
</dbReference>
<dbReference type="SMART" id="SM00075">
    <property type="entry name" value="HYDRO"/>
    <property type="match status" value="1"/>
</dbReference>
<dbReference type="PROSITE" id="PS00956">
    <property type="entry name" value="HYDROPHOBIN"/>
    <property type="match status" value="1"/>
</dbReference>
<evidence type="ECO:0000250" key="1">
    <source>
        <dbReference type="UniProtKB" id="D8QCG9"/>
    </source>
</evidence>
<evidence type="ECO:0000269" key="2">
    <source>
    </source>
</evidence>
<evidence type="ECO:0000269" key="3">
    <source>
    </source>
</evidence>
<evidence type="ECO:0000269" key="4">
    <source>
    </source>
</evidence>
<evidence type="ECO:0000269" key="5">
    <source>
    </source>
</evidence>
<evidence type="ECO:0000303" key="6">
    <source>
    </source>
</evidence>
<evidence type="ECO:0000305" key="7"/>
<name>HGF1_GRIFR</name>